<gene>
    <name type="primary">eif2b5</name>
    <name type="ORF">DDB_G0283163</name>
</gene>
<keyword id="KW-0963">Cytoplasm</keyword>
<keyword id="KW-1185">Reference proteome</keyword>
<keyword id="KW-0808">Transferase</keyword>
<feature type="chain" id="PRO_0000328350" description="Translation initiation factor eIF2B subunit epsilon">
    <location>
        <begin position="1"/>
        <end position="707"/>
    </location>
</feature>
<feature type="domain" description="W2" evidence="3">
    <location>
        <begin position="516"/>
        <end position="693"/>
    </location>
</feature>
<feature type="region of interest" description="Disordered" evidence="4">
    <location>
        <begin position="489"/>
        <end position="526"/>
    </location>
</feature>
<feature type="region of interest" description="Disordered" evidence="4">
    <location>
        <begin position="686"/>
        <end position="707"/>
    </location>
</feature>
<feature type="compositionally biased region" description="Acidic residues" evidence="4">
    <location>
        <begin position="688"/>
        <end position="707"/>
    </location>
</feature>
<evidence type="ECO:0000250" key="1">
    <source>
        <dbReference type="UniProtKB" id="P56287"/>
    </source>
</evidence>
<evidence type="ECO:0000250" key="2">
    <source>
        <dbReference type="UniProtKB" id="Q13144"/>
    </source>
</evidence>
<evidence type="ECO:0000255" key="3">
    <source>
        <dbReference type="PROSITE-ProRule" id="PRU00695"/>
    </source>
</evidence>
<evidence type="ECO:0000256" key="4">
    <source>
        <dbReference type="SAM" id="MobiDB-lite"/>
    </source>
</evidence>
<evidence type="ECO:0000305" key="5"/>
<proteinExistence type="inferred from homology"/>
<sequence>MSKNDKKNKQSGSSNMDQLKSEDILQAVVLGDSFDRKFAPITLEKPRTLLPLVNIPLLDYTLEFLAASGVQQIFVFCCAHASQIKEYIQSSRWHDLPGVQVICMTGSNCRTTGDALRGVYDAQVIQSDFILISGDVVSNMNLQKALQIHKDRRELDKNNIMTMVYKQASSTHRTRSKQDDTVIWCNRDTMQVVCYDNSPSKKKSSISVELFQKHPSIQMRYDLIDCHIDICSPEVLALFNDNFDFADIRKDFIHDILTSDLLDYKLSAYVLQGEYAARVKDLRTYHSVSKDIIHRWTFPMVPDNNFMCNSSYSLSRQMIYKEKNVKLLGDCLISDETVIGTQTEIGAGSIVSHSTIGRNCIIGKNVKINGSYIWDDVTIQDNAIIDHSIICNGSIIKSSSIIGRGSIIGFNVYIGQSKTLEPFSKITMAQYNEDEDDEELLEEYFKEINLNDDNNNNNNNNNENNKTNRWLMENELYNELVPRINDSIHDDIESDESGDEGDKSGGKIKNNKNNDDNPIEPDSVKFHREVGDTIRRGIIEKLPLENIQLEINGLKFAYDRDGLDCLTSILPVLLESSSSSSSTTDSVTPKELQQFIAGRISAFSPLLVKFSSEDSMVDLIFKIQDFCDENEKFKVVFQPILHQLYENDVISEEAIFEWAEEIEGDEEDDGFYLKKCKGFIDWLKSAEEESDDSDDSDDDDDDSDESD</sequence>
<name>EI2BE_DICDI</name>
<accession>Q54RF3</accession>
<organism>
    <name type="scientific">Dictyostelium discoideum</name>
    <name type="common">Social amoeba</name>
    <dbReference type="NCBI Taxonomy" id="44689"/>
    <lineage>
        <taxon>Eukaryota</taxon>
        <taxon>Amoebozoa</taxon>
        <taxon>Evosea</taxon>
        <taxon>Eumycetozoa</taxon>
        <taxon>Dictyostelia</taxon>
        <taxon>Dictyosteliales</taxon>
        <taxon>Dictyosteliaceae</taxon>
        <taxon>Dictyostelium</taxon>
    </lineage>
</organism>
<comment type="function">
    <text evidence="2">Acts as a component of the translation initiation factor 2B (eIF2B) complex, which catalyzes the exchange of GDP for GTP on eukaryotic initiation factor 2 (eIF2) gamma subunit. Its guanine nucleotide exchange factor activity is repressed when bound to eIF2 complex phosphorylated on the alpha subunit, thereby limiting the amount of methionyl-initiator methionine tRNA available to the ribosome and consequently global translation is repressed.</text>
</comment>
<comment type="subunit">
    <text evidence="2">Component of the translation initiation factor 2B (eIF2B) complex which is a heterodecamer of two sets of five different subunits: alpha, beta, gamma, delta and epsilon. Subunits alpha, beta and delta comprise a regulatory subcomplex and subunits epsilon and gamma comprise a catalytic subcomplex. Within the complex, the hexameric regulatory complex resides at the center, with the two heterodimeric catalytic subcomplexes bound on opposite sides.</text>
</comment>
<comment type="subcellular location">
    <subcellularLocation>
        <location evidence="1">Cytoplasm</location>
        <location evidence="1">Cytosol</location>
    </subcellularLocation>
</comment>
<comment type="similarity">
    <text evidence="5">Belongs to the eIF-2B gamma/epsilon subunits family.</text>
</comment>
<protein>
    <recommendedName>
        <fullName>Translation initiation factor eIF2B subunit epsilon</fullName>
    </recommendedName>
    <alternativeName>
        <fullName>eIF2B GDP-GTP exchange factor subunit epsilon</fullName>
    </alternativeName>
</protein>
<reference key="1">
    <citation type="journal article" date="2005" name="Nature">
        <title>The genome of the social amoeba Dictyostelium discoideum.</title>
        <authorList>
            <person name="Eichinger L."/>
            <person name="Pachebat J.A."/>
            <person name="Gloeckner G."/>
            <person name="Rajandream M.A."/>
            <person name="Sucgang R."/>
            <person name="Berriman M."/>
            <person name="Song J."/>
            <person name="Olsen R."/>
            <person name="Szafranski K."/>
            <person name="Xu Q."/>
            <person name="Tunggal B."/>
            <person name="Kummerfeld S."/>
            <person name="Madera M."/>
            <person name="Konfortov B.A."/>
            <person name="Rivero F."/>
            <person name="Bankier A.T."/>
            <person name="Lehmann R."/>
            <person name="Hamlin N."/>
            <person name="Davies R."/>
            <person name="Gaudet P."/>
            <person name="Fey P."/>
            <person name="Pilcher K."/>
            <person name="Chen G."/>
            <person name="Saunders D."/>
            <person name="Sodergren E.J."/>
            <person name="Davis P."/>
            <person name="Kerhornou A."/>
            <person name="Nie X."/>
            <person name="Hall N."/>
            <person name="Anjard C."/>
            <person name="Hemphill L."/>
            <person name="Bason N."/>
            <person name="Farbrother P."/>
            <person name="Desany B."/>
            <person name="Just E."/>
            <person name="Morio T."/>
            <person name="Rost R."/>
            <person name="Churcher C.M."/>
            <person name="Cooper J."/>
            <person name="Haydock S."/>
            <person name="van Driessche N."/>
            <person name="Cronin A."/>
            <person name="Goodhead I."/>
            <person name="Muzny D.M."/>
            <person name="Mourier T."/>
            <person name="Pain A."/>
            <person name="Lu M."/>
            <person name="Harper D."/>
            <person name="Lindsay R."/>
            <person name="Hauser H."/>
            <person name="James K.D."/>
            <person name="Quiles M."/>
            <person name="Madan Babu M."/>
            <person name="Saito T."/>
            <person name="Buchrieser C."/>
            <person name="Wardroper A."/>
            <person name="Felder M."/>
            <person name="Thangavelu M."/>
            <person name="Johnson D."/>
            <person name="Knights A."/>
            <person name="Loulseged H."/>
            <person name="Mungall K.L."/>
            <person name="Oliver K."/>
            <person name="Price C."/>
            <person name="Quail M.A."/>
            <person name="Urushihara H."/>
            <person name="Hernandez J."/>
            <person name="Rabbinowitsch E."/>
            <person name="Steffen D."/>
            <person name="Sanders M."/>
            <person name="Ma J."/>
            <person name="Kohara Y."/>
            <person name="Sharp S."/>
            <person name="Simmonds M.N."/>
            <person name="Spiegler S."/>
            <person name="Tivey A."/>
            <person name="Sugano S."/>
            <person name="White B."/>
            <person name="Walker D."/>
            <person name="Woodward J.R."/>
            <person name="Winckler T."/>
            <person name="Tanaka Y."/>
            <person name="Shaulsky G."/>
            <person name="Schleicher M."/>
            <person name="Weinstock G.M."/>
            <person name="Rosenthal A."/>
            <person name="Cox E.C."/>
            <person name="Chisholm R.L."/>
            <person name="Gibbs R.A."/>
            <person name="Loomis W.F."/>
            <person name="Platzer M."/>
            <person name="Kay R.R."/>
            <person name="Williams J.G."/>
            <person name="Dear P.H."/>
            <person name="Noegel A.A."/>
            <person name="Barrell B.G."/>
            <person name="Kuspa A."/>
        </authorList>
    </citation>
    <scope>NUCLEOTIDE SEQUENCE [LARGE SCALE GENOMIC DNA]</scope>
    <source>
        <strain>AX4</strain>
    </source>
</reference>
<dbReference type="EMBL" id="AAFI02000051">
    <property type="protein sequence ID" value="EAL65820.1"/>
    <property type="molecule type" value="Genomic_DNA"/>
</dbReference>
<dbReference type="RefSeq" id="XP_639192.1">
    <property type="nucleotide sequence ID" value="XM_634100.1"/>
</dbReference>
<dbReference type="SMR" id="Q54RF3"/>
<dbReference type="FunCoup" id="Q54RF3">
    <property type="interactions" value="574"/>
</dbReference>
<dbReference type="STRING" id="44689.Q54RF3"/>
<dbReference type="PaxDb" id="44689-DDB0234243"/>
<dbReference type="EnsemblProtists" id="EAL65820">
    <property type="protein sequence ID" value="EAL65820"/>
    <property type="gene ID" value="DDB_G0283163"/>
</dbReference>
<dbReference type="GeneID" id="8623968"/>
<dbReference type="KEGG" id="ddi:DDB_G0283163"/>
<dbReference type="dictyBase" id="DDB_G0283163">
    <property type="gene designation" value="eif2b5"/>
</dbReference>
<dbReference type="VEuPathDB" id="AmoebaDB:DDB_G0283163"/>
<dbReference type="eggNOG" id="KOG1461">
    <property type="taxonomic scope" value="Eukaryota"/>
</dbReference>
<dbReference type="HOGENOM" id="CLU_012507_1_0_1"/>
<dbReference type="InParanoid" id="Q54RF3"/>
<dbReference type="OMA" id="FVICRSH"/>
<dbReference type="PhylomeDB" id="Q54RF3"/>
<dbReference type="Reactome" id="R-DDI-72731">
    <property type="pathway name" value="Recycling of eIF2:GDP"/>
</dbReference>
<dbReference type="PRO" id="PR:Q54RF3"/>
<dbReference type="Proteomes" id="UP000002195">
    <property type="component" value="Chromosome 4"/>
</dbReference>
<dbReference type="GO" id="GO:0005829">
    <property type="term" value="C:cytosol"/>
    <property type="evidence" value="ECO:0007669"/>
    <property type="project" value="UniProtKB-SubCell"/>
</dbReference>
<dbReference type="GO" id="GO:0005851">
    <property type="term" value="C:eukaryotic translation initiation factor 2B complex"/>
    <property type="evidence" value="ECO:0000250"/>
    <property type="project" value="UniProtKB"/>
</dbReference>
<dbReference type="GO" id="GO:0005085">
    <property type="term" value="F:guanyl-nucleotide exchange factor activity"/>
    <property type="evidence" value="ECO:0000250"/>
    <property type="project" value="UniProtKB"/>
</dbReference>
<dbReference type="GO" id="GO:0016740">
    <property type="term" value="F:transferase activity"/>
    <property type="evidence" value="ECO:0007669"/>
    <property type="project" value="UniProtKB-KW"/>
</dbReference>
<dbReference type="GO" id="GO:0003743">
    <property type="term" value="F:translation initiation factor activity"/>
    <property type="evidence" value="ECO:0000318"/>
    <property type="project" value="GO_Central"/>
</dbReference>
<dbReference type="GO" id="GO:0031369">
    <property type="term" value="F:translation initiation factor binding"/>
    <property type="evidence" value="ECO:0000318"/>
    <property type="project" value="GO_Central"/>
</dbReference>
<dbReference type="GO" id="GO:0002183">
    <property type="term" value="P:cytoplasmic translational initiation"/>
    <property type="evidence" value="ECO:0000250"/>
    <property type="project" value="UniProtKB"/>
</dbReference>
<dbReference type="CDD" id="cd04197">
    <property type="entry name" value="eIF-2B_epsilon_N"/>
    <property type="match status" value="1"/>
</dbReference>
<dbReference type="CDD" id="cd05787">
    <property type="entry name" value="LbH_eIF2B_epsilon"/>
    <property type="match status" value="1"/>
</dbReference>
<dbReference type="CDD" id="cd11558">
    <property type="entry name" value="W2_eIF2B_epsilon"/>
    <property type="match status" value="1"/>
</dbReference>
<dbReference type="FunFam" id="1.25.40.180:FF:000022">
    <property type="entry name" value="Translation initiation factor eIF-2B epsilon subunit"/>
    <property type="match status" value="1"/>
</dbReference>
<dbReference type="FunFam" id="2.160.10.10:FF:000071">
    <property type="entry name" value="Translation initiation factor eIF-2B subunit epsilon"/>
    <property type="match status" value="1"/>
</dbReference>
<dbReference type="FunFam" id="3.90.550.10:FF:000066">
    <property type="entry name" value="Translation initiation factor eIF-2B subunit epsilon"/>
    <property type="match status" value="1"/>
</dbReference>
<dbReference type="Gene3D" id="1.25.40.180">
    <property type="match status" value="1"/>
</dbReference>
<dbReference type="Gene3D" id="2.160.10.10">
    <property type="entry name" value="Hexapeptide repeat proteins"/>
    <property type="match status" value="1"/>
</dbReference>
<dbReference type="Gene3D" id="3.90.550.10">
    <property type="entry name" value="Spore Coat Polysaccharide Biosynthesis Protein SpsA, Chain A"/>
    <property type="match status" value="1"/>
</dbReference>
<dbReference type="InterPro" id="IPR016024">
    <property type="entry name" value="ARM-type_fold"/>
</dbReference>
<dbReference type="InterPro" id="IPR035543">
    <property type="entry name" value="eIF-2B_epsilon_N"/>
</dbReference>
<dbReference type="InterPro" id="IPR051956">
    <property type="entry name" value="eIF2B_epsilon"/>
</dbReference>
<dbReference type="InterPro" id="IPR005835">
    <property type="entry name" value="NTP_transferase_dom"/>
</dbReference>
<dbReference type="InterPro" id="IPR029044">
    <property type="entry name" value="Nucleotide-diphossugar_trans"/>
</dbReference>
<dbReference type="InterPro" id="IPR003307">
    <property type="entry name" value="W2_domain"/>
</dbReference>
<dbReference type="InterPro" id="IPR044123">
    <property type="entry name" value="W2_eIF2B_epsilon"/>
</dbReference>
<dbReference type="PANTHER" id="PTHR45887">
    <property type="entry name" value="TRANSLATION INITIATION FACTOR EIF-2B SUBUNIT EPSILON"/>
    <property type="match status" value="1"/>
</dbReference>
<dbReference type="PANTHER" id="PTHR45887:SF1">
    <property type="entry name" value="TRANSLATION INITIATION FACTOR EIF-2B SUBUNIT EPSILON"/>
    <property type="match status" value="1"/>
</dbReference>
<dbReference type="Pfam" id="PF25084">
    <property type="entry name" value="LbH_EIF2B"/>
    <property type="match status" value="1"/>
</dbReference>
<dbReference type="Pfam" id="PF00483">
    <property type="entry name" value="NTP_transferase"/>
    <property type="match status" value="1"/>
</dbReference>
<dbReference type="Pfam" id="PF02020">
    <property type="entry name" value="W2"/>
    <property type="match status" value="1"/>
</dbReference>
<dbReference type="SMART" id="SM00515">
    <property type="entry name" value="eIF5C"/>
    <property type="match status" value="1"/>
</dbReference>
<dbReference type="SUPFAM" id="SSF48371">
    <property type="entry name" value="ARM repeat"/>
    <property type="match status" value="1"/>
</dbReference>
<dbReference type="SUPFAM" id="SSF53448">
    <property type="entry name" value="Nucleotide-diphospho-sugar transferases"/>
    <property type="match status" value="1"/>
</dbReference>
<dbReference type="PROSITE" id="PS51363">
    <property type="entry name" value="W2"/>
    <property type="match status" value="1"/>
</dbReference>